<feature type="chain" id="PRO_0000170237" description="Large ribosomal subunit protein bL33">
    <location>
        <begin position="1"/>
        <end position="47"/>
    </location>
</feature>
<evidence type="ECO:0000255" key="1">
    <source>
        <dbReference type="HAMAP-Rule" id="MF_00294"/>
    </source>
</evidence>
<evidence type="ECO:0000305" key="2"/>
<gene>
    <name evidence="1" type="primary">rpmG</name>
</gene>
<dbReference type="EMBL" id="AY234839">
    <property type="protein sequence ID" value="AAO62603.1"/>
    <property type="molecule type" value="Genomic_DNA"/>
</dbReference>
<dbReference type="SMR" id="Q7X143"/>
<dbReference type="KEGG" id="sxy:BE24_00095"/>
<dbReference type="GO" id="GO:0005737">
    <property type="term" value="C:cytoplasm"/>
    <property type="evidence" value="ECO:0007669"/>
    <property type="project" value="UniProtKB-ARBA"/>
</dbReference>
<dbReference type="GO" id="GO:1990904">
    <property type="term" value="C:ribonucleoprotein complex"/>
    <property type="evidence" value="ECO:0007669"/>
    <property type="project" value="UniProtKB-KW"/>
</dbReference>
<dbReference type="GO" id="GO:0005840">
    <property type="term" value="C:ribosome"/>
    <property type="evidence" value="ECO:0007669"/>
    <property type="project" value="UniProtKB-KW"/>
</dbReference>
<dbReference type="GO" id="GO:0003735">
    <property type="term" value="F:structural constituent of ribosome"/>
    <property type="evidence" value="ECO:0007669"/>
    <property type="project" value="InterPro"/>
</dbReference>
<dbReference type="GO" id="GO:0006412">
    <property type="term" value="P:translation"/>
    <property type="evidence" value="ECO:0007669"/>
    <property type="project" value="UniProtKB-UniRule"/>
</dbReference>
<dbReference type="Gene3D" id="2.20.28.120">
    <property type="entry name" value="Ribosomal protein L33"/>
    <property type="match status" value="1"/>
</dbReference>
<dbReference type="HAMAP" id="MF_00294">
    <property type="entry name" value="Ribosomal_bL33"/>
    <property type="match status" value="1"/>
</dbReference>
<dbReference type="InterPro" id="IPR001705">
    <property type="entry name" value="Ribosomal_bL33"/>
</dbReference>
<dbReference type="InterPro" id="IPR018264">
    <property type="entry name" value="Ribosomal_bL33_CS"/>
</dbReference>
<dbReference type="InterPro" id="IPR038584">
    <property type="entry name" value="Ribosomal_bL33_sf"/>
</dbReference>
<dbReference type="InterPro" id="IPR011332">
    <property type="entry name" value="Ribosomal_zn-bd"/>
</dbReference>
<dbReference type="NCBIfam" id="NF001764">
    <property type="entry name" value="PRK00504.1"/>
    <property type="match status" value="1"/>
</dbReference>
<dbReference type="NCBIfam" id="TIGR01023">
    <property type="entry name" value="rpmG_bact"/>
    <property type="match status" value="1"/>
</dbReference>
<dbReference type="Pfam" id="PF00471">
    <property type="entry name" value="Ribosomal_L33"/>
    <property type="match status" value="1"/>
</dbReference>
<dbReference type="SUPFAM" id="SSF57829">
    <property type="entry name" value="Zn-binding ribosomal proteins"/>
    <property type="match status" value="1"/>
</dbReference>
<dbReference type="PROSITE" id="PS00582">
    <property type="entry name" value="RIBOSOMAL_L33"/>
    <property type="match status" value="1"/>
</dbReference>
<comment type="similarity">
    <text evidence="1">Belongs to the bacterial ribosomal protein bL33 family.</text>
</comment>
<sequence>MKKVPLTCDVCGSRNYNVPKQSNLTSRLTLKKFCSRCNAHTMHKESK</sequence>
<organism>
    <name type="scientific">Staphylococcus xylosus</name>
    <dbReference type="NCBI Taxonomy" id="1288"/>
    <lineage>
        <taxon>Bacteria</taxon>
        <taxon>Bacillati</taxon>
        <taxon>Bacillota</taxon>
        <taxon>Bacilli</taxon>
        <taxon>Bacillales</taxon>
        <taxon>Staphylococcaceae</taxon>
        <taxon>Staphylococcus</taxon>
    </lineage>
</organism>
<keyword id="KW-0687">Ribonucleoprotein</keyword>
<keyword id="KW-0689">Ribosomal protein</keyword>
<accession>Q7X143</accession>
<reference key="1">
    <citation type="journal article" date="2003" name="Genes Cells">
        <title>A new staphylococcal sigma factor in the conserved gene cassette: functional significance and implication for the evolutionary processes.</title>
        <authorList>
            <person name="Morikawa K."/>
            <person name="Inose Y."/>
            <person name="Okamura H."/>
            <person name="Maruyama A."/>
            <person name="Hayashi H."/>
            <person name="Takeyasu K."/>
            <person name="Ohta T."/>
        </authorList>
    </citation>
    <scope>NUCLEOTIDE SEQUENCE [GENOMIC DNA]</scope>
    <source>
        <strain>GIFU 9129</strain>
    </source>
</reference>
<protein>
    <recommendedName>
        <fullName evidence="1">Large ribosomal subunit protein bL33</fullName>
    </recommendedName>
    <alternativeName>
        <fullName evidence="2">50S ribosomal protein L33</fullName>
    </alternativeName>
</protein>
<name>RL33_STAXY</name>
<proteinExistence type="inferred from homology"/>